<proteinExistence type="inferred from homology"/>
<keyword id="KW-0067">ATP-binding</keyword>
<keyword id="KW-1003">Cell membrane</keyword>
<keyword id="KW-0963">Cytoplasm</keyword>
<keyword id="KW-0472">Membrane</keyword>
<keyword id="KW-0547">Nucleotide-binding</keyword>
<keyword id="KW-0653">Protein transport</keyword>
<keyword id="KW-1278">Translocase</keyword>
<keyword id="KW-0811">Translocation</keyword>
<keyword id="KW-0813">Transport</keyword>
<gene>
    <name evidence="1" type="primary">secA</name>
    <name type="ordered locus">MAV_2894</name>
</gene>
<reference key="1">
    <citation type="submission" date="2006-10" db="EMBL/GenBank/DDBJ databases">
        <authorList>
            <person name="Fleischmann R.D."/>
            <person name="Dodson R.J."/>
            <person name="Haft D.H."/>
            <person name="Merkel J.S."/>
            <person name="Nelson W.C."/>
            <person name="Fraser C.M."/>
        </authorList>
    </citation>
    <scope>NUCLEOTIDE SEQUENCE [LARGE SCALE GENOMIC DNA]</scope>
    <source>
        <strain>104</strain>
    </source>
</reference>
<name>SECA_MYCA1</name>
<feature type="chain" id="PRO_0000318377" description="Protein translocase subunit SecA">
    <location>
        <begin position="1"/>
        <end position="777"/>
    </location>
</feature>
<feature type="binding site" evidence="1">
    <location>
        <position position="94"/>
    </location>
    <ligand>
        <name>ATP</name>
        <dbReference type="ChEBI" id="CHEBI:30616"/>
    </ligand>
</feature>
<feature type="binding site" evidence="1">
    <location>
        <begin position="112"/>
        <end position="116"/>
    </location>
    <ligand>
        <name>ATP</name>
        <dbReference type="ChEBI" id="CHEBI:30616"/>
    </ligand>
</feature>
<feature type="binding site" evidence="1">
    <location>
        <position position="501"/>
    </location>
    <ligand>
        <name>ATP</name>
        <dbReference type="ChEBI" id="CHEBI:30616"/>
    </ligand>
</feature>
<accession>A0QGP2</accession>
<evidence type="ECO:0000255" key="1">
    <source>
        <dbReference type="HAMAP-Rule" id="MF_01382"/>
    </source>
</evidence>
<organism>
    <name type="scientific">Mycobacterium avium (strain 104)</name>
    <dbReference type="NCBI Taxonomy" id="243243"/>
    <lineage>
        <taxon>Bacteria</taxon>
        <taxon>Bacillati</taxon>
        <taxon>Actinomycetota</taxon>
        <taxon>Actinomycetes</taxon>
        <taxon>Mycobacteriales</taxon>
        <taxon>Mycobacteriaceae</taxon>
        <taxon>Mycobacterium</taxon>
        <taxon>Mycobacterium avium complex (MAC)</taxon>
    </lineage>
</organism>
<protein>
    <recommendedName>
        <fullName evidence="1">Protein translocase subunit SecA</fullName>
        <ecNumber evidence="1">7.4.2.8</ecNumber>
    </recommendedName>
</protein>
<sequence length="777" mass="85017">MPKTNRAQPGRLSSRFWRLLGASTEKNRSRSLTLVTDSSEYDDEAAGLTDEQLRKAAGLLNLEDLAESEDIPQFLAIAREAAERATGLRPFDVQLLGALRMLAGDVIEMATGEGKTLAGAIAAAGYALAGRHVHVVTINDYLARRDAEWMGPLIEAMGLTVGWITAESSSEERRAAYGCDVTYASVNEIGFDVLRDQLVTDVADLVSPNPDVALIDEADSVLVDEALVPLVLAGTTHRETPRLEIIKLVGELEAGTDYDTDADSRNVHLTDVGARKVEKALGGIDLYSEEHVGTTLTEVNVALHAHVLLQRDVHYIVRDDAVHLINASRGRIAQLQRWPDGLQAAVEAKEGIETTETGEVLDTITVQALINRYATVCGMTGTALAAGEQLRQFYKLGVSPIPPNKPNIREDEADRVYITAAAKNDAIVEHIIEVHETGQPVLVGTRDVAESEELHERLLRRGVPAVVLNAKNDAEEAQVIAEAGKFGVVTVSTQMAGRGTDIRLGGSDEADHDRVAELGGLHVVGTGRHHTERLDNQLRGRAGRQGDPGSSVFFSSWEDDVVAANLDRNKLPMETDPETGDGRIVSPKAAGLLDHAQRVAEGRMLDVHANTWRYNQLIAQQRAIIVDRRNTLLRTATAREELAELAPKRYRELAEEIPEERLETICRHIMLYHLDRGWADHLAYLADIRESIHLRALGRQNPLDEFHRLAVDAFASLAADAIEAAQQTFETANVLEDEPGLDLSKLARPTSTWTYMVNDNPLSDDTLSTLSLPGVFR</sequence>
<comment type="function">
    <text evidence="1">Part of the Sec protein translocase complex. Interacts with the SecYEG preprotein conducting channel. Has a central role in coupling the hydrolysis of ATP to the transfer of proteins into and across the cell membrane, serving as an ATP-driven molecular motor driving the stepwise translocation of polypeptide chains across the membrane.</text>
</comment>
<comment type="catalytic activity">
    <reaction evidence="1">
        <text>ATP + H2O + cellular proteinSide 1 = ADP + phosphate + cellular proteinSide 2.</text>
        <dbReference type="EC" id="7.4.2.8"/>
    </reaction>
</comment>
<comment type="subunit">
    <text evidence="1">Monomer and homodimer. Part of the essential Sec protein translocation apparatus which comprises SecA, SecYEG and auxiliary proteins SecDF. Other proteins may also be involved.</text>
</comment>
<comment type="subcellular location">
    <subcellularLocation>
        <location evidence="1">Cell membrane</location>
        <topology evidence="1">Peripheral membrane protein</topology>
        <orientation evidence="1">Cytoplasmic side</orientation>
    </subcellularLocation>
    <subcellularLocation>
        <location evidence="1">Cytoplasm</location>
    </subcellularLocation>
    <text evidence="1">Distribution is 50-50.</text>
</comment>
<comment type="miscellaneous">
    <text>This Mycobacterium is unusual in only having an intact secA2 gene. The secA1 gene, which is essential in MYCS2, is annotated as a pseudogene in this organism (MAV_4203).</text>
</comment>
<comment type="similarity">
    <text evidence="1">Belongs to the SecA family.</text>
</comment>
<dbReference type="EC" id="7.4.2.8" evidence="1"/>
<dbReference type="EMBL" id="CP000479">
    <property type="protein sequence ID" value="ABK65479.1"/>
    <property type="molecule type" value="Genomic_DNA"/>
</dbReference>
<dbReference type="SMR" id="A0QGP2"/>
<dbReference type="KEGG" id="mav:MAV_2894"/>
<dbReference type="HOGENOM" id="CLU_005314_3_2_11"/>
<dbReference type="Proteomes" id="UP000001574">
    <property type="component" value="Chromosome"/>
</dbReference>
<dbReference type="GO" id="GO:0031522">
    <property type="term" value="C:cell envelope Sec protein transport complex"/>
    <property type="evidence" value="ECO:0007669"/>
    <property type="project" value="TreeGrafter"/>
</dbReference>
<dbReference type="GO" id="GO:0005829">
    <property type="term" value="C:cytosol"/>
    <property type="evidence" value="ECO:0007669"/>
    <property type="project" value="TreeGrafter"/>
</dbReference>
<dbReference type="GO" id="GO:0005886">
    <property type="term" value="C:plasma membrane"/>
    <property type="evidence" value="ECO:0007669"/>
    <property type="project" value="UniProtKB-SubCell"/>
</dbReference>
<dbReference type="GO" id="GO:0005524">
    <property type="term" value="F:ATP binding"/>
    <property type="evidence" value="ECO:0007669"/>
    <property type="project" value="UniProtKB-UniRule"/>
</dbReference>
<dbReference type="GO" id="GO:0008564">
    <property type="term" value="F:protein-exporting ATPase activity"/>
    <property type="evidence" value="ECO:0007669"/>
    <property type="project" value="UniProtKB-EC"/>
</dbReference>
<dbReference type="GO" id="GO:0065002">
    <property type="term" value="P:intracellular protein transmembrane transport"/>
    <property type="evidence" value="ECO:0007669"/>
    <property type="project" value="UniProtKB-UniRule"/>
</dbReference>
<dbReference type="GO" id="GO:0017038">
    <property type="term" value="P:protein import"/>
    <property type="evidence" value="ECO:0007669"/>
    <property type="project" value="InterPro"/>
</dbReference>
<dbReference type="GO" id="GO:0006605">
    <property type="term" value="P:protein targeting"/>
    <property type="evidence" value="ECO:0007669"/>
    <property type="project" value="UniProtKB-UniRule"/>
</dbReference>
<dbReference type="GO" id="GO:0043952">
    <property type="term" value="P:protein transport by the Sec complex"/>
    <property type="evidence" value="ECO:0007669"/>
    <property type="project" value="TreeGrafter"/>
</dbReference>
<dbReference type="CDD" id="cd17928">
    <property type="entry name" value="DEXDc_SecA"/>
    <property type="match status" value="1"/>
</dbReference>
<dbReference type="CDD" id="cd18803">
    <property type="entry name" value="SF2_C_secA"/>
    <property type="match status" value="1"/>
</dbReference>
<dbReference type="FunFam" id="3.40.50.300:FF:000429">
    <property type="entry name" value="Preprotein translocase subunit SecA"/>
    <property type="match status" value="1"/>
</dbReference>
<dbReference type="FunFam" id="3.90.1440.10:FF:000004">
    <property type="entry name" value="Protein translocase subunit SecA"/>
    <property type="match status" value="1"/>
</dbReference>
<dbReference type="Gene3D" id="1.10.3060.10">
    <property type="entry name" value="Helical scaffold and wing domains of SecA"/>
    <property type="match status" value="1"/>
</dbReference>
<dbReference type="Gene3D" id="3.40.50.300">
    <property type="entry name" value="P-loop containing nucleotide triphosphate hydrolases"/>
    <property type="match status" value="3"/>
</dbReference>
<dbReference type="Gene3D" id="3.90.1440.10">
    <property type="entry name" value="SecA, preprotein cross-linking domain"/>
    <property type="match status" value="1"/>
</dbReference>
<dbReference type="HAMAP" id="MF_01382">
    <property type="entry name" value="SecA"/>
    <property type="match status" value="1"/>
</dbReference>
<dbReference type="InterPro" id="IPR014001">
    <property type="entry name" value="Helicase_ATP-bd"/>
</dbReference>
<dbReference type="InterPro" id="IPR001650">
    <property type="entry name" value="Helicase_C-like"/>
</dbReference>
<dbReference type="InterPro" id="IPR027417">
    <property type="entry name" value="P-loop_NTPase"/>
</dbReference>
<dbReference type="InterPro" id="IPR000185">
    <property type="entry name" value="SecA"/>
</dbReference>
<dbReference type="InterPro" id="IPR026389">
    <property type="entry name" value="SecA_Actinobact-type"/>
</dbReference>
<dbReference type="InterPro" id="IPR020937">
    <property type="entry name" value="SecA_CS"/>
</dbReference>
<dbReference type="InterPro" id="IPR011115">
    <property type="entry name" value="SecA_DEAD"/>
</dbReference>
<dbReference type="InterPro" id="IPR014018">
    <property type="entry name" value="SecA_motor_DEAD"/>
</dbReference>
<dbReference type="InterPro" id="IPR011130">
    <property type="entry name" value="SecA_preprotein_X-link_dom"/>
</dbReference>
<dbReference type="InterPro" id="IPR044722">
    <property type="entry name" value="SecA_SF2_C"/>
</dbReference>
<dbReference type="InterPro" id="IPR011116">
    <property type="entry name" value="SecA_Wing/Scaffold"/>
</dbReference>
<dbReference type="InterPro" id="IPR036266">
    <property type="entry name" value="SecA_Wing/Scaffold_sf"/>
</dbReference>
<dbReference type="InterPro" id="IPR036670">
    <property type="entry name" value="SecA_X-link_sf"/>
</dbReference>
<dbReference type="NCBIfam" id="TIGR04221">
    <property type="entry name" value="SecA2_Mycobac"/>
    <property type="match status" value="1"/>
</dbReference>
<dbReference type="PANTHER" id="PTHR30612:SF0">
    <property type="entry name" value="CHLOROPLAST PROTEIN-TRANSPORTING ATPASE"/>
    <property type="match status" value="1"/>
</dbReference>
<dbReference type="PANTHER" id="PTHR30612">
    <property type="entry name" value="SECA INNER MEMBRANE COMPONENT OF SEC PROTEIN SECRETION SYSTEM"/>
    <property type="match status" value="1"/>
</dbReference>
<dbReference type="Pfam" id="PF21090">
    <property type="entry name" value="P-loop_SecA"/>
    <property type="match status" value="1"/>
</dbReference>
<dbReference type="Pfam" id="PF07517">
    <property type="entry name" value="SecA_DEAD"/>
    <property type="match status" value="1"/>
</dbReference>
<dbReference type="Pfam" id="PF01043">
    <property type="entry name" value="SecA_PP_bind"/>
    <property type="match status" value="1"/>
</dbReference>
<dbReference type="Pfam" id="PF07516">
    <property type="entry name" value="SecA_SW"/>
    <property type="match status" value="1"/>
</dbReference>
<dbReference type="PRINTS" id="PR00906">
    <property type="entry name" value="SECA"/>
</dbReference>
<dbReference type="SMART" id="SM00957">
    <property type="entry name" value="SecA_DEAD"/>
    <property type="match status" value="1"/>
</dbReference>
<dbReference type="SMART" id="SM00958">
    <property type="entry name" value="SecA_PP_bind"/>
    <property type="match status" value="1"/>
</dbReference>
<dbReference type="SUPFAM" id="SSF81886">
    <property type="entry name" value="Helical scaffold and wing domains of SecA"/>
    <property type="match status" value="1"/>
</dbReference>
<dbReference type="SUPFAM" id="SSF52540">
    <property type="entry name" value="P-loop containing nucleoside triphosphate hydrolases"/>
    <property type="match status" value="2"/>
</dbReference>
<dbReference type="SUPFAM" id="SSF81767">
    <property type="entry name" value="Pre-protein crosslinking domain of SecA"/>
    <property type="match status" value="1"/>
</dbReference>
<dbReference type="PROSITE" id="PS01312">
    <property type="entry name" value="SECA"/>
    <property type="match status" value="1"/>
</dbReference>
<dbReference type="PROSITE" id="PS51196">
    <property type="entry name" value="SECA_MOTOR_DEAD"/>
    <property type="match status" value="1"/>
</dbReference>